<sequence length="406" mass="45217">MKYPTLLDRFLVYVKENTRSDENSTTTPSTQNQVEFAQNILLPEMERIGLQNVHYLPNGFAVGTLPANDPSLTRKIGFIAHMDTADFNAEGVNPQIIENYDGNPIALGTSGYELHPKDFPQLANYHGQILITTDGTTLLGSDDKSGIAEIMTAIEFLIQNPDIKHCEIRVGFGPDEEIGVGADKFDVKDFDVDFAYTMDGGPLGELQYETFSAAGAKIDFLGRNVHPGSAKDQMINAFQMAIDFHNALPETDRPEKTEGYEGFFHLMNMEGSVDTASTTYIIRDFEEEDFQARKQLMLDIAEKMNANFDTPRVIVNLHDQYYNMKKIIEKDMTPINIAKDVMENLGIKPLIEPVRGGTDGSKISFMGIPTPNIFAGGENMHGRFEFVSLETMEKAVDVILGIVAYK</sequence>
<protein>
    <recommendedName>
        <fullName evidence="1">Peptidase T</fullName>
        <ecNumber evidence="1">3.4.11.4</ecNumber>
    </recommendedName>
    <alternativeName>
        <fullName evidence="1">Aminotripeptidase</fullName>
        <shortName evidence="1">Tripeptidase</shortName>
    </alternativeName>
    <alternativeName>
        <fullName evidence="1">Tripeptide aminopeptidase</fullName>
    </alternativeName>
</protein>
<gene>
    <name evidence="1" type="primary">pepT</name>
    <name type="ordered locus">SSU05_1128</name>
</gene>
<dbReference type="EC" id="3.4.11.4" evidence="1"/>
<dbReference type="EMBL" id="CP000407">
    <property type="protein sequence ID" value="ABP90094.1"/>
    <property type="molecule type" value="Genomic_DNA"/>
</dbReference>
<dbReference type="SMR" id="A4VVF5"/>
<dbReference type="STRING" id="391295.SSU05_1128"/>
<dbReference type="MEROPS" id="M20.003"/>
<dbReference type="KEGG" id="ssu:SSU05_1128"/>
<dbReference type="eggNOG" id="COG2195">
    <property type="taxonomic scope" value="Bacteria"/>
</dbReference>
<dbReference type="HOGENOM" id="CLU_053676_0_0_9"/>
<dbReference type="GO" id="GO:0005829">
    <property type="term" value="C:cytosol"/>
    <property type="evidence" value="ECO:0007669"/>
    <property type="project" value="TreeGrafter"/>
</dbReference>
<dbReference type="GO" id="GO:0008237">
    <property type="term" value="F:metallopeptidase activity"/>
    <property type="evidence" value="ECO:0007669"/>
    <property type="project" value="UniProtKB-KW"/>
</dbReference>
<dbReference type="GO" id="GO:0045148">
    <property type="term" value="F:tripeptide aminopeptidase activity"/>
    <property type="evidence" value="ECO:0007669"/>
    <property type="project" value="UniProtKB-UniRule"/>
</dbReference>
<dbReference type="GO" id="GO:0008270">
    <property type="term" value="F:zinc ion binding"/>
    <property type="evidence" value="ECO:0007669"/>
    <property type="project" value="UniProtKB-UniRule"/>
</dbReference>
<dbReference type="GO" id="GO:0043171">
    <property type="term" value="P:peptide catabolic process"/>
    <property type="evidence" value="ECO:0007669"/>
    <property type="project" value="UniProtKB-UniRule"/>
</dbReference>
<dbReference type="GO" id="GO:0006508">
    <property type="term" value="P:proteolysis"/>
    <property type="evidence" value="ECO:0007669"/>
    <property type="project" value="UniProtKB-UniRule"/>
</dbReference>
<dbReference type="CDD" id="cd03892">
    <property type="entry name" value="M20_peptT"/>
    <property type="match status" value="1"/>
</dbReference>
<dbReference type="FunFam" id="3.30.70.360:FF:000002">
    <property type="entry name" value="Peptidase T"/>
    <property type="match status" value="1"/>
</dbReference>
<dbReference type="Gene3D" id="3.30.70.360">
    <property type="match status" value="1"/>
</dbReference>
<dbReference type="Gene3D" id="3.40.630.10">
    <property type="entry name" value="Zn peptidases"/>
    <property type="match status" value="1"/>
</dbReference>
<dbReference type="HAMAP" id="MF_00550">
    <property type="entry name" value="Aminopeptidase_M20"/>
    <property type="match status" value="1"/>
</dbReference>
<dbReference type="InterPro" id="IPR001261">
    <property type="entry name" value="ArgE/DapE_CS"/>
</dbReference>
<dbReference type="InterPro" id="IPR036264">
    <property type="entry name" value="Bact_exopeptidase_dim_dom"/>
</dbReference>
<dbReference type="InterPro" id="IPR002933">
    <property type="entry name" value="Peptidase_M20"/>
</dbReference>
<dbReference type="InterPro" id="IPR011650">
    <property type="entry name" value="Peptidase_M20_dimer"/>
</dbReference>
<dbReference type="InterPro" id="IPR010161">
    <property type="entry name" value="Peptidase_M20B"/>
</dbReference>
<dbReference type="NCBIfam" id="TIGR01882">
    <property type="entry name" value="peptidase-T"/>
    <property type="match status" value="1"/>
</dbReference>
<dbReference type="NCBIfam" id="NF003976">
    <property type="entry name" value="PRK05469.1"/>
    <property type="match status" value="1"/>
</dbReference>
<dbReference type="NCBIfam" id="NF009920">
    <property type="entry name" value="PRK13381.1"/>
    <property type="match status" value="1"/>
</dbReference>
<dbReference type="PANTHER" id="PTHR42994">
    <property type="entry name" value="PEPTIDASE T"/>
    <property type="match status" value="1"/>
</dbReference>
<dbReference type="PANTHER" id="PTHR42994:SF1">
    <property type="entry name" value="PEPTIDASE T"/>
    <property type="match status" value="1"/>
</dbReference>
<dbReference type="Pfam" id="PF07687">
    <property type="entry name" value="M20_dimer"/>
    <property type="match status" value="1"/>
</dbReference>
<dbReference type="Pfam" id="PF01546">
    <property type="entry name" value="Peptidase_M20"/>
    <property type="match status" value="1"/>
</dbReference>
<dbReference type="PIRSF" id="PIRSF037215">
    <property type="entry name" value="Peptidase_M20B"/>
    <property type="match status" value="1"/>
</dbReference>
<dbReference type="SUPFAM" id="SSF55031">
    <property type="entry name" value="Bacterial exopeptidase dimerisation domain"/>
    <property type="match status" value="1"/>
</dbReference>
<dbReference type="SUPFAM" id="SSF53187">
    <property type="entry name" value="Zn-dependent exopeptidases"/>
    <property type="match status" value="1"/>
</dbReference>
<dbReference type="PROSITE" id="PS00758">
    <property type="entry name" value="ARGE_DAPE_CPG2_1"/>
    <property type="match status" value="1"/>
</dbReference>
<dbReference type="PROSITE" id="PS00759">
    <property type="entry name" value="ARGE_DAPE_CPG2_2"/>
    <property type="match status" value="1"/>
</dbReference>
<name>PEPT_STRSY</name>
<reference key="1">
    <citation type="journal article" date="2007" name="PLoS ONE">
        <title>A glimpse of streptococcal toxic shock syndrome from comparative genomics of S. suis 2 Chinese isolates.</title>
        <authorList>
            <person name="Chen C."/>
            <person name="Tang J."/>
            <person name="Dong W."/>
            <person name="Wang C."/>
            <person name="Feng Y."/>
            <person name="Wang J."/>
            <person name="Zheng F."/>
            <person name="Pan X."/>
            <person name="Liu D."/>
            <person name="Li M."/>
            <person name="Song Y."/>
            <person name="Zhu X."/>
            <person name="Sun H."/>
            <person name="Feng T."/>
            <person name="Guo Z."/>
            <person name="Ju A."/>
            <person name="Ge J."/>
            <person name="Dong Y."/>
            <person name="Sun W."/>
            <person name="Jiang Y."/>
            <person name="Wang J."/>
            <person name="Yan J."/>
            <person name="Yang H."/>
            <person name="Wang X."/>
            <person name="Gao G.F."/>
            <person name="Yang R."/>
            <person name="Wang J."/>
            <person name="Yu J."/>
        </authorList>
    </citation>
    <scope>NUCLEOTIDE SEQUENCE [LARGE SCALE GENOMIC DNA]</scope>
    <source>
        <strain>05ZYH33</strain>
    </source>
</reference>
<keyword id="KW-0031">Aminopeptidase</keyword>
<keyword id="KW-0963">Cytoplasm</keyword>
<keyword id="KW-0378">Hydrolase</keyword>
<keyword id="KW-0479">Metal-binding</keyword>
<keyword id="KW-0482">Metalloprotease</keyword>
<keyword id="KW-0645">Protease</keyword>
<keyword id="KW-0862">Zinc</keyword>
<evidence type="ECO:0000255" key="1">
    <source>
        <dbReference type="HAMAP-Rule" id="MF_00550"/>
    </source>
</evidence>
<accession>A4VVF5</accession>
<organism>
    <name type="scientific">Streptococcus suis (strain 05ZYH33)</name>
    <dbReference type="NCBI Taxonomy" id="391295"/>
    <lineage>
        <taxon>Bacteria</taxon>
        <taxon>Bacillati</taxon>
        <taxon>Bacillota</taxon>
        <taxon>Bacilli</taxon>
        <taxon>Lactobacillales</taxon>
        <taxon>Streptococcaceae</taxon>
        <taxon>Streptococcus</taxon>
    </lineage>
</organism>
<feature type="chain" id="PRO_1000129058" description="Peptidase T">
    <location>
        <begin position="1"/>
        <end position="406"/>
    </location>
</feature>
<feature type="active site" evidence="1">
    <location>
        <position position="83"/>
    </location>
</feature>
<feature type="active site" description="Proton acceptor" evidence="1">
    <location>
        <position position="176"/>
    </location>
</feature>
<feature type="binding site" evidence="1">
    <location>
        <position position="81"/>
    </location>
    <ligand>
        <name>Zn(2+)</name>
        <dbReference type="ChEBI" id="CHEBI:29105"/>
        <label>1</label>
    </ligand>
</feature>
<feature type="binding site" evidence="1">
    <location>
        <position position="142"/>
    </location>
    <ligand>
        <name>Zn(2+)</name>
        <dbReference type="ChEBI" id="CHEBI:29105"/>
        <label>1</label>
    </ligand>
</feature>
<feature type="binding site" evidence="1">
    <location>
        <position position="142"/>
    </location>
    <ligand>
        <name>Zn(2+)</name>
        <dbReference type="ChEBI" id="CHEBI:29105"/>
        <label>2</label>
    </ligand>
</feature>
<feature type="binding site" evidence="1">
    <location>
        <position position="177"/>
    </location>
    <ligand>
        <name>Zn(2+)</name>
        <dbReference type="ChEBI" id="CHEBI:29105"/>
        <label>2</label>
    </ligand>
</feature>
<feature type="binding site" evidence="1">
    <location>
        <position position="199"/>
    </location>
    <ligand>
        <name>Zn(2+)</name>
        <dbReference type="ChEBI" id="CHEBI:29105"/>
        <label>1</label>
    </ligand>
</feature>
<feature type="binding site" evidence="1">
    <location>
        <position position="381"/>
    </location>
    <ligand>
        <name>Zn(2+)</name>
        <dbReference type="ChEBI" id="CHEBI:29105"/>
        <label>2</label>
    </ligand>
</feature>
<proteinExistence type="inferred from homology"/>
<comment type="function">
    <text evidence="1">Cleaves the N-terminal amino acid of tripeptides.</text>
</comment>
<comment type="catalytic activity">
    <reaction evidence="1">
        <text>Release of the N-terminal residue from a tripeptide.</text>
        <dbReference type="EC" id="3.4.11.4"/>
    </reaction>
</comment>
<comment type="cofactor">
    <cofactor evidence="1">
        <name>Zn(2+)</name>
        <dbReference type="ChEBI" id="CHEBI:29105"/>
    </cofactor>
    <text evidence="1">Binds 2 Zn(2+) ions per subunit.</text>
</comment>
<comment type="subcellular location">
    <subcellularLocation>
        <location evidence="1">Cytoplasm</location>
    </subcellularLocation>
</comment>
<comment type="similarity">
    <text evidence="1">Belongs to the peptidase M20B family.</text>
</comment>